<reference key="1">
    <citation type="submission" date="1994-07" db="EMBL/GenBank/DDBJ databases">
        <authorList>
            <person name="Waterhouse R.N."/>
            <person name="Smyth A.J."/>
            <person name="Prosser I.M."/>
            <person name="Forde B.G."/>
            <person name="Clarkson D.T."/>
        </authorList>
    </citation>
    <scope>NUCLEOTIDE SEQUENCE [GENOMIC DNA]</scope>
    <source>
        <strain>cv. Gifu / B-129</strain>
    </source>
</reference>
<sequence length="900" mass="101420">MAASVDNRQYSTLNGVVRSFTPNNTYLHDPKPSFPAVNLDLDASSSDDDDEKDDASILKDLIRKGNAEIESSVLDPRDQGTADNWISRNSSMVRLTGKHPFNSEPPLPRLMHHGFITPVPLHYVRNHGPVPKARWDDWTVEVTGLVKTPTRFSMDRLVRDFPSRELPVTLVCAGNRRKEQNMVRQSIGFNWGSAGVSTSVWRGVSLRHILRRCRIQTRSRGALHVCFEGDEDLPGGGGSKYSTSIRREVAMDPSRDVILAYMQNGEVLAPDHGFPVRVIIPGFIGGRMVKWLKRIVVTEEECDGHYHYKDNRVLPSHVDAELANEEGWWYKPEYIINELNINSVITTPCHDEILPINAWTTQRPYTLRGYSYSGGGRKVTRVEVTLDGGETWFVCALDQQEKPNKYGKYWCWCFWSLEVEVLDLLGTKEIAVRAWDEALNTQPENLIWNVMGMMNNCWFRVKTNVCKPHKGEIGIVFEHPTQPGNQPGGWMAKEKHLEISQQDSRPILKKSVSSPFMNTFTKMYSLSEVKKHNSPDSAWIIVHGHVYDCTRFLKDHPGGADSILINAGTDCTEEFEAIHSDKAKKMLEDYRVGELITTGYTSDSSSPNNSLHGNSEFKHLAPIKEITTMSLPPLPRRKVALIPREKIPCKLISRTSISHDVRVFRFALPSEDQQLGLPVGKHIFLCATVDGKLCMRAYTPTSGVDEVGYFELVVKVYFKGVHPKFPNGGAMSQHLDSLPIGSDLDVKGPLGHIEYTGRGNFLVHGKHRFAKKLAMLAGGTGITPIYQVAQAILKDPEDHTKMYVVYANRTEDDILLREELDTWAKKYEDRFKVWYVVETAKEGWGYSVGFVTEGVMREHLPEAGDDALALACGPPPMIQFAVNPNLEKMGYDVKNDLLVF</sequence>
<accession>P39869</accession>
<evidence type="ECO:0000250" key="1"/>
<evidence type="ECO:0000250" key="2">
    <source>
        <dbReference type="UniProtKB" id="A0A286R227"/>
    </source>
</evidence>
<evidence type="ECO:0000250" key="3">
    <source>
        <dbReference type="UniProtKB" id="P17571"/>
    </source>
</evidence>
<evidence type="ECO:0000250" key="4">
    <source>
        <dbReference type="UniProtKB" id="P49050"/>
    </source>
</evidence>
<evidence type="ECO:0000255" key="5"/>
<evidence type="ECO:0000255" key="6">
    <source>
        <dbReference type="PROSITE-ProRule" id="PRU00279"/>
    </source>
</evidence>
<evidence type="ECO:0000255" key="7">
    <source>
        <dbReference type="PROSITE-ProRule" id="PRU00716"/>
    </source>
</evidence>
<evidence type="ECO:0000305" key="8"/>
<protein>
    <recommendedName>
        <fullName>Nitrate reductase [NADH]</fullName>
        <shortName>NR</shortName>
        <ecNumber>1.7.1.1</ecNumber>
    </recommendedName>
</protein>
<comment type="function">
    <text>Nitrate reductase is a key enzyme involved in the first step of nitrate assimilation in plants, fungi and bacteria.</text>
</comment>
<comment type="catalytic activity">
    <reaction>
        <text>nitrite + NAD(+) + H2O = nitrate + NADH + H(+)</text>
        <dbReference type="Rhea" id="RHEA:17913"/>
        <dbReference type="ChEBI" id="CHEBI:15377"/>
        <dbReference type="ChEBI" id="CHEBI:15378"/>
        <dbReference type="ChEBI" id="CHEBI:16301"/>
        <dbReference type="ChEBI" id="CHEBI:17632"/>
        <dbReference type="ChEBI" id="CHEBI:57540"/>
        <dbReference type="ChEBI" id="CHEBI:57945"/>
        <dbReference type="EC" id="1.7.1.1"/>
    </reaction>
</comment>
<comment type="cofactor">
    <cofactor evidence="1">
        <name>FAD</name>
        <dbReference type="ChEBI" id="CHEBI:57692"/>
    </cofactor>
    <text evidence="1">Binds 1 FAD.</text>
</comment>
<comment type="cofactor">
    <cofactor evidence="1">
        <name>heme</name>
        <dbReference type="ChEBI" id="CHEBI:30413"/>
    </cofactor>
    <text evidence="1">Binds 1 heme group. The heme group is called cytochrome b-557.</text>
</comment>
<comment type="cofactor">
    <cofactor evidence="1">
        <name>Mo-molybdopterin</name>
        <dbReference type="ChEBI" id="CHEBI:71302"/>
    </cofactor>
    <text evidence="1">Binds 1 Mo-molybdopterin (Mo-MPT) cofactor per subunit.</text>
</comment>
<comment type="subunit">
    <text evidence="1">Homodimer.</text>
</comment>
<comment type="similarity">
    <text evidence="8">Belongs to the nitrate reductase family.</text>
</comment>
<organism>
    <name type="scientific">Lotus japonicus</name>
    <name type="common">Lotus corniculatus var. japonicus</name>
    <dbReference type="NCBI Taxonomy" id="34305"/>
    <lineage>
        <taxon>Eukaryota</taxon>
        <taxon>Viridiplantae</taxon>
        <taxon>Streptophyta</taxon>
        <taxon>Embryophyta</taxon>
        <taxon>Tracheophyta</taxon>
        <taxon>Spermatophyta</taxon>
        <taxon>Magnoliopsida</taxon>
        <taxon>eudicotyledons</taxon>
        <taxon>Gunneridae</taxon>
        <taxon>Pentapetalae</taxon>
        <taxon>rosids</taxon>
        <taxon>fabids</taxon>
        <taxon>Fabales</taxon>
        <taxon>Fabaceae</taxon>
        <taxon>Papilionoideae</taxon>
        <taxon>50 kb inversion clade</taxon>
        <taxon>NPAAA clade</taxon>
        <taxon>Hologalegina</taxon>
        <taxon>robinioid clade</taxon>
        <taxon>Loteae</taxon>
        <taxon>Lotus</taxon>
    </lineage>
</organism>
<name>NIA_LOTJA</name>
<feature type="chain" id="PRO_0000166059" description="Nitrate reductase [NADH]">
    <location>
        <begin position="1"/>
        <end position="900"/>
    </location>
</feature>
<feature type="domain" description="Cytochrome b5 heme-binding" evidence="6">
    <location>
        <begin position="521"/>
        <end position="596"/>
    </location>
</feature>
<feature type="domain" description="FAD-binding FR-type" evidence="7">
    <location>
        <begin position="644"/>
        <end position="756"/>
    </location>
</feature>
<feature type="binding site" evidence="4">
    <location>
        <position position="172"/>
    </location>
    <ligand>
        <name>Mo-molybdopterin</name>
        <dbReference type="ChEBI" id="CHEBI:71302"/>
    </ligand>
    <ligandPart>
        <name>Mo</name>
        <dbReference type="ChEBI" id="CHEBI:28685"/>
    </ligandPart>
</feature>
<feature type="binding site" description="axial binding residue" evidence="6">
    <location>
        <position position="556"/>
    </location>
    <ligand>
        <name>heme</name>
        <dbReference type="ChEBI" id="CHEBI:30413"/>
    </ligand>
    <ligandPart>
        <name>Fe</name>
        <dbReference type="ChEBI" id="CHEBI:18248"/>
    </ligandPart>
</feature>
<feature type="binding site" description="axial binding residue" evidence="6">
    <location>
        <position position="579"/>
    </location>
    <ligand>
        <name>heme</name>
        <dbReference type="ChEBI" id="CHEBI:30413"/>
    </ligand>
    <ligandPart>
        <name>Fe</name>
        <dbReference type="ChEBI" id="CHEBI:18248"/>
    </ligandPart>
</feature>
<feature type="binding site" evidence="2">
    <location>
        <begin position="696"/>
        <end position="699"/>
    </location>
    <ligand>
        <name>FAD</name>
        <dbReference type="ChEBI" id="CHEBI:57692"/>
    </ligand>
</feature>
<feature type="binding site" evidence="2">
    <location>
        <begin position="713"/>
        <end position="717"/>
    </location>
    <ligand>
        <name>FAD</name>
        <dbReference type="ChEBI" id="CHEBI:57692"/>
    </ligand>
</feature>
<feature type="binding site" evidence="3">
    <location>
        <position position="718"/>
    </location>
    <ligand>
        <name>FAD</name>
        <dbReference type="ChEBI" id="CHEBI:57692"/>
    </ligand>
</feature>
<feature type="binding site" evidence="2">
    <location>
        <position position="725"/>
    </location>
    <ligand>
        <name>FAD</name>
        <dbReference type="ChEBI" id="CHEBI:57692"/>
    </ligand>
</feature>
<feature type="binding site" evidence="2">
    <location>
        <begin position="730"/>
        <end position="732"/>
    </location>
    <ligand>
        <name>FAD</name>
        <dbReference type="ChEBI" id="CHEBI:57692"/>
    </ligand>
</feature>
<feature type="binding site" evidence="2">
    <location>
        <position position="783"/>
    </location>
    <ligand>
        <name>FAD</name>
        <dbReference type="ChEBI" id="CHEBI:57692"/>
    </ligand>
</feature>
<feature type="disulfide bond" description="Interchain" evidence="5">
    <location>
        <position position="411"/>
    </location>
</feature>
<keyword id="KW-1015">Disulfide bond</keyword>
<keyword id="KW-0274">FAD</keyword>
<keyword id="KW-0285">Flavoprotein</keyword>
<keyword id="KW-0349">Heme</keyword>
<keyword id="KW-0408">Iron</keyword>
<keyword id="KW-0479">Metal-binding</keyword>
<keyword id="KW-0500">Molybdenum</keyword>
<keyword id="KW-0520">NAD</keyword>
<keyword id="KW-0534">Nitrate assimilation</keyword>
<keyword id="KW-0560">Oxidoreductase</keyword>
<dbReference type="EC" id="1.7.1.1"/>
<dbReference type="EMBL" id="X80670">
    <property type="protein sequence ID" value="CAA56696.1"/>
    <property type="molecule type" value="Genomic_DNA"/>
</dbReference>
<dbReference type="PIR" id="S47029">
    <property type="entry name" value="S47029"/>
</dbReference>
<dbReference type="SMR" id="P39869"/>
<dbReference type="OrthoDB" id="432685at2759"/>
<dbReference type="GO" id="GO:0071949">
    <property type="term" value="F:FAD binding"/>
    <property type="evidence" value="ECO:0000250"/>
    <property type="project" value="UniProtKB"/>
</dbReference>
<dbReference type="GO" id="GO:0020037">
    <property type="term" value="F:heme binding"/>
    <property type="evidence" value="ECO:0007669"/>
    <property type="project" value="InterPro"/>
</dbReference>
<dbReference type="GO" id="GO:0030151">
    <property type="term" value="F:molybdenum ion binding"/>
    <property type="evidence" value="ECO:0000250"/>
    <property type="project" value="UniProtKB"/>
</dbReference>
<dbReference type="GO" id="GO:0043546">
    <property type="term" value="F:molybdopterin cofactor binding"/>
    <property type="evidence" value="ECO:0007669"/>
    <property type="project" value="InterPro"/>
</dbReference>
<dbReference type="GO" id="GO:0009703">
    <property type="term" value="F:nitrate reductase (NADH) activity"/>
    <property type="evidence" value="ECO:0007669"/>
    <property type="project" value="UniProtKB-EC"/>
</dbReference>
<dbReference type="GO" id="GO:0050464">
    <property type="term" value="F:nitrate reductase (NADPH) activity"/>
    <property type="evidence" value="ECO:0007669"/>
    <property type="project" value="InterPro"/>
</dbReference>
<dbReference type="GO" id="GO:0008482">
    <property type="term" value="F:sulfite oxidase activity"/>
    <property type="evidence" value="ECO:0007669"/>
    <property type="project" value="TreeGrafter"/>
</dbReference>
<dbReference type="GO" id="GO:0042128">
    <property type="term" value="P:nitrate assimilation"/>
    <property type="evidence" value="ECO:0007669"/>
    <property type="project" value="UniProtKB-KW"/>
</dbReference>
<dbReference type="GO" id="GO:0006809">
    <property type="term" value="P:nitric oxide biosynthetic process"/>
    <property type="evidence" value="ECO:0007669"/>
    <property type="project" value="InterPro"/>
</dbReference>
<dbReference type="GO" id="GO:0006790">
    <property type="term" value="P:sulfur compound metabolic process"/>
    <property type="evidence" value="ECO:0007669"/>
    <property type="project" value="TreeGrafter"/>
</dbReference>
<dbReference type="CDD" id="cd06183">
    <property type="entry name" value="cyt_b5_reduct_like"/>
    <property type="match status" value="1"/>
</dbReference>
<dbReference type="CDD" id="cd02112">
    <property type="entry name" value="eukary_NR_Moco"/>
    <property type="match status" value="1"/>
</dbReference>
<dbReference type="FunFam" id="2.40.30.10:FF:000021">
    <property type="entry name" value="NADH-cytochrome b5 reductase"/>
    <property type="match status" value="1"/>
</dbReference>
<dbReference type="FunFam" id="2.60.40.650:FF:000001">
    <property type="entry name" value="Nitrate reductase"/>
    <property type="match status" value="1"/>
</dbReference>
<dbReference type="FunFam" id="3.10.120.10:FF:000008">
    <property type="entry name" value="Nitrate reductase"/>
    <property type="match status" value="1"/>
</dbReference>
<dbReference type="FunFam" id="3.90.420.10:FF:000003">
    <property type="entry name" value="Nitrate reductase"/>
    <property type="match status" value="1"/>
</dbReference>
<dbReference type="FunFam" id="3.40.50.80:FF:000025">
    <property type="entry name" value="Nitrate reductase [NADH]"/>
    <property type="match status" value="1"/>
</dbReference>
<dbReference type="Gene3D" id="2.60.40.650">
    <property type="match status" value="1"/>
</dbReference>
<dbReference type="Gene3D" id="3.10.120.10">
    <property type="entry name" value="Cytochrome b5-like heme/steroid binding domain"/>
    <property type="match status" value="1"/>
</dbReference>
<dbReference type="Gene3D" id="3.40.50.80">
    <property type="entry name" value="Nucleotide-binding domain of ferredoxin-NADP reductase (FNR) module"/>
    <property type="match status" value="1"/>
</dbReference>
<dbReference type="Gene3D" id="3.90.420.10">
    <property type="entry name" value="Oxidoreductase, molybdopterin-binding domain"/>
    <property type="match status" value="1"/>
</dbReference>
<dbReference type="Gene3D" id="2.40.30.10">
    <property type="entry name" value="Translation factors"/>
    <property type="match status" value="1"/>
</dbReference>
<dbReference type="InterPro" id="IPR008333">
    <property type="entry name" value="Cbr1-like_FAD-bd_dom"/>
</dbReference>
<dbReference type="InterPro" id="IPR001199">
    <property type="entry name" value="Cyt_B5-like_heme/steroid-bd"/>
</dbReference>
<dbReference type="InterPro" id="IPR036400">
    <property type="entry name" value="Cyt_B5-like_heme/steroid_sf"/>
</dbReference>
<dbReference type="InterPro" id="IPR018506">
    <property type="entry name" value="Cyt_B5_heme-BS"/>
</dbReference>
<dbReference type="InterPro" id="IPR017927">
    <property type="entry name" value="FAD-bd_FR_type"/>
</dbReference>
<dbReference type="InterPro" id="IPR001709">
    <property type="entry name" value="Flavoprot_Pyr_Nucl_cyt_Rdtase"/>
</dbReference>
<dbReference type="InterPro" id="IPR039261">
    <property type="entry name" value="FNR_nucleotide-bd"/>
</dbReference>
<dbReference type="InterPro" id="IPR014756">
    <property type="entry name" value="Ig_E-set"/>
</dbReference>
<dbReference type="InterPro" id="IPR005066">
    <property type="entry name" value="MoCF_OxRdtse_dimer"/>
</dbReference>
<dbReference type="InterPro" id="IPR008335">
    <property type="entry name" value="Mopterin_OxRdtase_euk"/>
</dbReference>
<dbReference type="InterPro" id="IPR012137">
    <property type="entry name" value="Nitr_rd_NADH"/>
</dbReference>
<dbReference type="InterPro" id="IPR001433">
    <property type="entry name" value="OxRdtase_FAD/NAD-bd"/>
</dbReference>
<dbReference type="InterPro" id="IPR000572">
    <property type="entry name" value="OxRdtase_Mopterin-bd_dom"/>
</dbReference>
<dbReference type="InterPro" id="IPR036374">
    <property type="entry name" value="OxRdtase_Mopterin-bd_sf"/>
</dbReference>
<dbReference type="InterPro" id="IPR022407">
    <property type="entry name" value="OxRdtase_Mopterin_BS"/>
</dbReference>
<dbReference type="InterPro" id="IPR017938">
    <property type="entry name" value="Riboflavin_synthase-like_b-brl"/>
</dbReference>
<dbReference type="PANTHER" id="PTHR19372:SF7">
    <property type="entry name" value="SULFITE OXIDASE, MITOCHONDRIAL"/>
    <property type="match status" value="1"/>
</dbReference>
<dbReference type="PANTHER" id="PTHR19372">
    <property type="entry name" value="SULFITE REDUCTASE"/>
    <property type="match status" value="1"/>
</dbReference>
<dbReference type="Pfam" id="PF00173">
    <property type="entry name" value="Cyt-b5"/>
    <property type="match status" value="1"/>
</dbReference>
<dbReference type="Pfam" id="PF00970">
    <property type="entry name" value="FAD_binding_6"/>
    <property type="match status" value="1"/>
</dbReference>
<dbReference type="Pfam" id="PF03404">
    <property type="entry name" value="Mo-co_dimer"/>
    <property type="match status" value="1"/>
</dbReference>
<dbReference type="Pfam" id="PF00175">
    <property type="entry name" value="NAD_binding_1"/>
    <property type="match status" value="1"/>
</dbReference>
<dbReference type="Pfam" id="PF00174">
    <property type="entry name" value="Oxidored_molyb"/>
    <property type="match status" value="1"/>
</dbReference>
<dbReference type="PIRSF" id="PIRSF000233">
    <property type="entry name" value="Nitr_rd_NADH"/>
    <property type="match status" value="1"/>
</dbReference>
<dbReference type="PRINTS" id="PR00406">
    <property type="entry name" value="CYTB5RDTASE"/>
</dbReference>
<dbReference type="PRINTS" id="PR00363">
    <property type="entry name" value="CYTOCHROMEB5"/>
</dbReference>
<dbReference type="PRINTS" id="PR00407">
    <property type="entry name" value="EUMOPTERIN"/>
</dbReference>
<dbReference type="PRINTS" id="PR00371">
    <property type="entry name" value="FPNCR"/>
</dbReference>
<dbReference type="SMART" id="SM01117">
    <property type="entry name" value="Cyt-b5"/>
    <property type="match status" value="1"/>
</dbReference>
<dbReference type="SUPFAM" id="SSF55856">
    <property type="entry name" value="Cytochrome b5-like heme/steroid binding domain"/>
    <property type="match status" value="1"/>
</dbReference>
<dbReference type="SUPFAM" id="SSF81296">
    <property type="entry name" value="E set domains"/>
    <property type="match status" value="1"/>
</dbReference>
<dbReference type="SUPFAM" id="SSF52343">
    <property type="entry name" value="Ferredoxin reductase-like, C-terminal NADP-linked domain"/>
    <property type="match status" value="1"/>
</dbReference>
<dbReference type="SUPFAM" id="SSF56524">
    <property type="entry name" value="Oxidoreductase molybdopterin-binding domain"/>
    <property type="match status" value="1"/>
</dbReference>
<dbReference type="SUPFAM" id="SSF63380">
    <property type="entry name" value="Riboflavin synthase domain-like"/>
    <property type="match status" value="1"/>
</dbReference>
<dbReference type="PROSITE" id="PS00191">
    <property type="entry name" value="CYTOCHROME_B5_1"/>
    <property type="match status" value="1"/>
</dbReference>
<dbReference type="PROSITE" id="PS50255">
    <property type="entry name" value="CYTOCHROME_B5_2"/>
    <property type="match status" value="1"/>
</dbReference>
<dbReference type="PROSITE" id="PS51384">
    <property type="entry name" value="FAD_FR"/>
    <property type="match status" value="1"/>
</dbReference>
<dbReference type="PROSITE" id="PS00559">
    <property type="entry name" value="MOLYBDOPTERIN_EUK"/>
    <property type="match status" value="1"/>
</dbReference>
<gene>
    <name type="primary">NIA</name>
</gene>
<proteinExistence type="inferred from homology"/>